<evidence type="ECO:0000255" key="1">
    <source>
        <dbReference type="HAMAP-Rule" id="MF_01274"/>
    </source>
</evidence>
<organism>
    <name type="scientific">Bifidobacterium adolescentis (strain ATCC 15703 / DSM 20083 / NCTC 11814 / E194a)</name>
    <dbReference type="NCBI Taxonomy" id="367928"/>
    <lineage>
        <taxon>Bacteria</taxon>
        <taxon>Bacillati</taxon>
        <taxon>Actinomycetota</taxon>
        <taxon>Actinomycetes</taxon>
        <taxon>Bifidobacteriales</taxon>
        <taxon>Bifidobacteriaceae</taxon>
        <taxon>Bifidobacterium</taxon>
    </lineage>
</organism>
<protein>
    <recommendedName>
        <fullName evidence="1">Type III pantothenate kinase</fullName>
        <ecNumber evidence="1">2.7.1.33</ecNumber>
    </recommendedName>
    <alternativeName>
        <fullName evidence="1">PanK-III</fullName>
    </alternativeName>
    <alternativeName>
        <fullName evidence="1">Pantothenic acid kinase</fullName>
    </alternativeName>
</protein>
<name>COAX_BIFAA</name>
<keyword id="KW-0067">ATP-binding</keyword>
<keyword id="KW-0173">Coenzyme A biosynthesis</keyword>
<keyword id="KW-0963">Cytoplasm</keyword>
<keyword id="KW-0418">Kinase</keyword>
<keyword id="KW-0479">Metal-binding</keyword>
<keyword id="KW-0547">Nucleotide-binding</keyword>
<keyword id="KW-0630">Potassium</keyword>
<keyword id="KW-1185">Reference proteome</keyword>
<keyword id="KW-0808">Transferase</keyword>
<gene>
    <name evidence="1" type="primary">coaX</name>
    <name type="ordered locus">BAD_0477</name>
</gene>
<feature type="chain" id="PRO_1000214182" description="Type III pantothenate kinase">
    <location>
        <begin position="1"/>
        <end position="256"/>
    </location>
</feature>
<feature type="active site" description="Proton acceptor" evidence="1">
    <location>
        <position position="110"/>
    </location>
</feature>
<feature type="binding site" evidence="1">
    <location>
        <begin position="7"/>
        <end position="14"/>
    </location>
    <ligand>
        <name>ATP</name>
        <dbReference type="ChEBI" id="CHEBI:30616"/>
    </ligand>
</feature>
<feature type="binding site" evidence="1">
    <location>
        <begin position="108"/>
        <end position="111"/>
    </location>
    <ligand>
        <name>substrate</name>
    </ligand>
</feature>
<feature type="binding site" evidence="1">
    <location>
        <position position="130"/>
    </location>
    <ligand>
        <name>K(+)</name>
        <dbReference type="ChEBI" id="CHEBI:29103"/>
    </ligand>
</feature>
<feature type="binding site" evidence="1">
    <location>
        <position position="133"/>
    </location>
    <ligand>
        <name>ATP</name>
        <dbReference type="ChEBI" id="CHEBI:30616"/>
    </ligand>
</feature>
<feature type="binding site" evidence="1">
    <location>
        <position position="185"/>
    </location>
    <ligand>
        <name>substrate</name>
    </ligand>
</feature>
<reference key="1">
    <citation type="submission" date="2006-12" db="EMBL/GenBank/DDBJ databases">
        <title>Bifidobacterium adolescentis complete genome sequence.</title>
        <authorList>
            <person name="Suzuki T."/>
            <person name="Tsuda Y."/>
            <person name="Kanou N."/>
            <person name="Inoue T."/>
            <person name="Kumazaki K."/>
            <person name="Nagano S."/>
            <person name="Hirai S."/>
            <person name="Tanaka K."/>
            <person name="Watanabe K."/>
        </authorList>
    </citation>
    <scope>NUCLEOTIDE SEQUENCE [LARGE SCALE GENOMIC DNA]</scope>
    <source>
        <strain>ATCC 15703 / DSM 20083 / NCTC 11814 / E194a</strain>
    </source>
</reference>
<accession>A1A0M5</accession>
<sequence>MLLMAVDIGNTNVVIGFIDDGRIAGTYRITTKANHTSDEYGLMITQFLALSGYKPADVDDVIISSVVPKVMHSFRASIVKFLDIDPMIVGPGIKTGLNIRMDNPQNMGADCIADCAGAYYEYGGPILVADFGTATTFNYVTADASVISGLITTGIRTAAAALWEGTAQLPEVEITRPKSILAKSTKPAMQAGLYYNFLGGIERTIAQFHKEIDEDFRVVATGGLSRVFADGTNMIDIYDPDLIFKGMWHIYDRNVR</sequence>
<dbReference type="EC" id="2.7.1.33" evidence="1"/>
<dbReference type="EMBL" id="AP009256">
    <property type="protein sequence ID" value="BAF39258.1"/>
    <property type="molecule type" value="Genomic_DNA"/>
</dbReference>
<dbReference type="RefSeq" id="WP_011742930.1">
    <property type="nucleotide sequence ID" value="NC_008618.1"/>
</dbReference>
<dbReference type="SMR" id="A1A0M5"/>
<dbReference type="STRING" id="367928.BAD_0477"/>
<dbReference type="PaxDb" id="1680-BADO_0494"/>
<dbReference type="GeneID" id="4556403"/>
<dbReference type="KEGG" id="bad:BAD_0477"/>
<dbReference type="HOGENOM" id="CLU_066627_1_0_11"/>
<dbReference type="UniPathway" id="UPA00241">
    <property type="reaction ID" value="UER00352"/>
</dbReference>
<dbReference type="Proteomes" id="UP000008702">
    <property type="component" value="Chromosome"/>
</dbReference>
<dbReference type="GO" id="GO:0005737">
    <property type="term" value="C:cytoplasm"/>
    <property type="evidence" value="ECO:0007669"/>
    <property type="project" value="UniProtKB-SubCell"/>
</dbReference>
<dbReference type="GO" id="GO:0005524">
    <property type="term" value="F:ATP binding"/>
    <property type="evidence" value="ECO:0007669"/>
    <property type="project" value="UniProtKB-UniRule"/>
</dbReference>
<dbReference type="GO" id="GO:0046872">
    <property type="term" value="F:metal ion binding"/>
    <property type="evidence" value="ECO:0007669"/>
    <property type="project" value="UniProtKB-KW"/>
</dbReference>
<dbReference type="GO" id="GO:0004594">
    <property type="term" value="F:pantothenate kinase activity"/>
    <property type="evidence" value="ECO:0007669"/>
    <property type="project" value="UniProtKB-UniRule"/>
</dbReference>
<dbReference type="GO" id="GO:0015937">
    <property type="term" value="P:coenzyme A biosynthetic process"/>
    <property type="evidence" value="ECO:0007669"/>
    <property type="project" value="UniProtKB-UniRule"/>
</dbReference>
<dbReference type="CDD" id="cd24015">
    <property type="entry name" value="ASKHA_NBD_PanK-III"/>
    <property type="match status" value="1"/>
</dbReference>
<dbReference type="Gene3D" id="3.30.420.40">
    <property type="match status" value="2"/>
</dbReference>
<dbReference type="HAMAP" id="MF_01274">
    <property type="entry name" value="Pantothen_kinase_3"/>
    <property type="match status" value="1"/>
</dbReference>
<dbReference type="InterPro" id="IPR043129">
    <property type="entry name" value="ATPase_NBD"/>
</dbReference>
<dbReference type="InterPro" id="IPR004619">
    <property type="entry name" value="Type_III_PanK"/>
</dbReference>
<dbReference type="NCBIfam" id="TIGR00671">
    <property type="entry name" value="baf"/>
    <property type="match status" value="1"/>
</dbReference>
<dbReference type="NCBIfam" id="NF009846">
    <property type="entry name" value="PRK13318.1-4"/>
    <property type="match status" value="1"/>
</dbReference>
<dbReference type="NCBIfam" id="NF009855">
    <property type="entry name" value="PRK13321.1"/>
    <property type="match status" value="1"/>
</dbReference>
<dbReference type="PANTHER" id="PTHR34265">
    <property type="entry name" value="TYPE III PANTOTHENATE KINASE"/>
    <property type="match status" value="1"/>
</dbReference>
<dbReference type="PANTHER" id="PTHR34265:SF1">
    <property type="entry name" value="TYPE III PANTOTHENATE KINASE"/>
    <property type="match status" value="1"/>
</dbReference>
<dbReference type="Pfam" id="PF03309">
    <property type="entry name" value="Pan_kinase"/>
    <property type="match status" value="1"/>
</dbReference>
<dbReference type="SUPFAM" id="SSF53067">
    <property type="entry name" value="Actin-like ATPase domain"/>
    <property type="match status" value="2"/>
</dbReference>
<comment type="function">
    <text evidence="1">Catalyzes the phosphorylation of pantothenate (Pan), the first step in CoA biosynthesis.</text>
</comment>
<comment type="catalytic activity">
    <reaction evidence="1">
        <text>(R)-pantothenate + ATP = (R)-4'-phosphopantothenate + ADP + H(+)</text>
        <dbReference type="Rhea" id="RHEA:16373"/>
        <dbReference type="ChEBI" id="CHEBI:10986"/>
        <dbReference type="ChEBI" id="CHEBI:15378"/>
        <dbReference type="ChEBI" id="CHEBI:29032"/>
        <dbReference type="ChEBI" id="CHEBI:30616"/>
        <dbReference type="ChEBI" id="CHEBI:456216"/>
        <dbReference type="EC" id="2.7.1.33"/>
    </reaction>
</comment>
<comment type="cofactor">
    <cofactor evidence="1">
        <name>NH4(+)</name>
        <dbReference type="ChEBI" id="CHEBI:28938"/>
    </cofactor>
    <cofactor evidence="1">
        <name>K(+)</name>
        <dbReference type="ChEBI" id="CHEBI:29103"/>
    </cofactor>
    <text evidence="1">A monovalent cation. Ammonium or potassium.</text>
</comment>
<comment type="pathway">
    <text evidence="1">Cofactor biosynthesis; coenzyme A biosynthesis; CoA from (R)-pantothenate: step 1/5.</text>
</comment>
<comment type="subunit">
    <text evidence="1">Homodimer.</text>
</comment>
<comment type="subcellular location">
    <subcellularLocation>
        <location evidence="1">Cytoplasm</location>
    </subcellularLocation>
</comment>
<comment type="similarity">
    <text evidence="1">Belongs to the type III pantothenate kinase family.</text>
</comment>
<proteinExistence type="inferred from homology"/>